<accession>C0ZA42</accession>
<keyword id="KW-1185">Reference proteome</keyword>
<keyword id="KW-0687">Ribonucleoprotein</keyword>
<keyword id="KW-0689">Ribosomal protein</keyword>
<keyword id="KW-0694">RNA-binding</keyword>
<keyword id="KW-0699">rRNA-binding</keyword>
<feature type="chain" id="PRO_1000196228" description="Large ribosomal subunit protein bL9">
    <location>
        <begin position="1"/>
        <end position="147"/>
    </location>
</feature>
<feature type="region of interest" description="Disordered" evidence="2">
    <location>
        <begin position="44"/>
        <end position="63"/>
    </location>
</feature>
<feature type="compositionally biased region" description="Basic and acidic residues" evidence="2">
    <location>
        <begin position="48"/>
        <end position="63"/>
    </location>
</feature>
<reference key="1">
    <citation type="submission" date="2005-03" db="EMBL/GenBank/DDBJ databases">
        <title>Brevibacillus brevis strain 47, complete genome.</title>
        <authorList>
            <person name="Hosoyama A."/>
            <person name="Yamada R."/>
            <person name="Hongo Y."/>
            <person name="Terui Y."/>
            <person name="Ankai A."/>
            <person name="Masuyama W."/>
            <person name="Sekiguchi M."/>
            <person name="Takeda T."/>
            <person name="Asano K."/>
            <person name="Ohji S."/>
            <person name="Ichikawa N."/>
            <person name="Narita S."/>
            <person name="Aoki N."/>
            <person name="Miura H."/>
            <person name="Matsushita S."/>
            <person name="Sekigawa T."/>
            <person name="Yamagata H."/>
            <person name="Yoshikawa H."/>
            <person name="Udaka S."/>
            <person name="Tanikawa S."/>
            <person name="Fujita N."/>
        </authorList>
    </citation>
    <scope>NUCLEOTIDE SEQUENCE [LARGE SCALE GENOMIC DNA]</scope>
    <source>
        <strain>47 / JCM 6285 / NBRC 100599</strain>
    </source>
</reference>
<name>RL9_BREBN</name>
<gene>
    <name evidence="1" type="primary">rplI</name>
    <name type="ordered locus">BBR47_59190</name>
</gene>
<protein>
    <recommendedName>
        <fullName evidence="1">Large ribosomal subunit protein bL9</fullName>
    </recommendedName>
    <alternativeName>
        <fullName evidence="3">50S ribosomal protein L9</fullName>
    </alternativeName>
</protein>
<organism>
    <name type="scientific">Brevibacillus brevis (strain 47 / JCM 6285 / NBRC 100599)</name>
    <dbReference type="NCBI Taxonomy" id="358681"/>
    <lineage>
        <taxon>Bacteria</taxon>
        <taxon>Bacillati</taxon>
        <taxon>Bacillota</taxon>
        <taxon>Bacilli</taxon>
        <taxon>Bacillales</taxon>
        <taxon>Paenibacillaceae</taxon>
        <taxon>Brevibacillus</taxon>
    </lineage>
</organism>
<comment type="function">
    <text evidence="1">Binds to the 23S rRNA.</text>
</comment>
<comment type="similarity">
    <text evidence="1">Belongs to the bacterial ribosomal protein bL9 family.</text>
</comment>
<sequence>MKVIFLQDVKGQGKKGEVKDLSEGYVRNFLLPKKLVKEATDSNVKTLDAQKRSEDKRKEQEKLDAQELGKKLEELTVKVTGKAGEGGRLFGAISSKQVAQALEDQYKIKVDKRKLEMDAIRALGVTQIKVKLHNEVTVTLKVHVVEE</sequence>
<proteinExistence type="inferred from homology"/>
<dbReference type="EMBL" id="AP008955">
    <property type="protein sequence ID" value="BAH46896.1"/>
    <property type="molecule type" value="Genomic_DNA"/>
</dbReference>
<dbReference type="RefSeq" id="WP_015894079.1">
    <property type="nucleotide sequence ID" value="NC_012491.1"/>
</dbReference>
<dbReference type="SMR" id="C0ZA42"/>
<dbReference type="STRING" id="358681.BBR47_59190"/>
<dbReference type="KEGG" id="bbe:BBR47_59190"/>
<dbReference type="eggNOG" id="COG0359">
    <property type="taxonomic scope" value="Bacteria"/>
</dbReference>
<dbReference type="HOGENOM" id="CLU_078938_3_0_9"/>
<dbReference type="Proteomes" id="UP000001877">
    <property type="component" value="Chromosome"/>
</dbReference>
<dbReference type="GO" id="GO:1990904">
    <property type="term" value="C:ribonucleoprotein complex"/>
    <property type="evidence" value="ECO:0007669"/>
    <property type="project" value="UniProtKB-KW"/>
</dbReference>
<dbReference type="GO" id="GO:0005840">
    <property type="term" value="C:ribosome"/>
    <property type="evidence" value="ECO:0007669"/>
    <property type="project" value="UniProtKB-KW"/>
</dbReference>
<dbReference type="GO" id="GO:0019843">
    <property type="term" value="F:rRNA binding"/>
    <property type="evidence" value="ECO:0007669"/>
    <property type="project" value="UniProtKB-UniRule"/>
</dbReference>
<dbReference type="GO" id="GO:0003735">
    <property type="term" value="F:structural constituent of ribosome"/>
    <property type="evidence" value="ECO:0007669"/>
    <property type="project" value="InterPro"/>
</dbReference>
<dbReference type="GO" id="GO:0006412">
    <property type="term" value="P:translation"/>
    <property type="evidence" value="ECO:0007669"/>
    <property type="project" value="UniProtKB-UniRule"/>
</dbReference>
<dbReference type="FunFam" id="3.40.5.10:FF:000002">
    <property type="entry name" value="50S ribosomal protein L9"/>
    <property type="match status" value="1"/>
</dbReference>
<dbReference type="Gene3D" id="3.10.430.100">
    <property type="entry name" value="Ribosomal protein L9, C-terminal domain"/>
    <property type="match status" value="1"/>
</dbReference>
<dbReference type="Gene3D" id="3.40.5.10">
    <property type="entry name" value="Ribosomal protein L9, N-terminal domain"/>
    <property type="match status" value="1"/>
</dbReference>
<dbReference type="HAMAP" id="MF_00503">
    <property type="entry name" value="Ribosomal_bL9"/>
    <property type="match status" value="1"/>
</dbReference>
<dbReference type="InterPro" id="IPR000244">
    <property type="entry name" value="Ribosomal_bL9"/>
</dbReference>
<dbReference type="InterPro" id="IPR009027">
    <property type="entry name" value="Ribosomal_bL9/RNase_H1_N"/>
</dbReference>
<dbReference type="InterPro" id="IPR020594">
    <property type="entry name" value="Ribosomal_bL9_bac/chp"/>
</dbReference>
<dbReference type="InterPro" id="IPR020069">
    <property type="entry name" value="Ribosomal_bL9_C"/>
</dbReference>
<dbReference type="InterPro" id="IPR036791">
    <property type="entry name" value="Ribosomal_bL9_C_sf"/>
</dbReference>
<dbReference type="InterPro" id="IPR020070">
    <property type="entry name" value="Ribosomal_bL9_N"/>
</dbReference>
<dbReference type="InterPro" id="IPR036935">
    <property type="entry name" value="Ribosomal_bL9_N_sf"/>
</dbReference>
<dbReference type="NCBIfam" id="TIGR00158">
    <property type="entry name" value="L9"/>
    <property type="match status" value="1"/>
</dbReference>
<dbReference type="PANTHER" id="PTHR21368">
    <property type="entry name" value="50S RIBOSOMAL PROTEIN L9"/>
    <property type="match status" value="1"/>
</dbReference>
<dbReference type="Pfam" id="PF03948">
    <property type="entry name" value="Ribosomal_L9_C"/>
    <property type="match status" value="1"/>
</dbReference>
<dbReference type="Pfam" id="PF01281">
    <property type="entry name" value="Ribosomal_L9_N"/>
    <property type="match status" value="1"/>
</dbReference>
<dbReference type="SUPFAM" id="SSF55658">
    <property type="entry name" value="L9 N-domain-like"/>
    <property type="match status" value="1"/>
</dbReference>
<dbReference type="SUPFAM" id="SSF55653">
    <property type="entry name" value="Ribosomal protein L9 C-domain"/>
    <property type="match status" value="1"/>
</dbReference>
<evidence type="ECO:0000255" key="1">
    <source>
        <dbReference type="HAMAP-Rule" id="MF_00503"/>
    </source>
</evidence>
<evidence type="ECO:0000256" key="2">
    <source>
        <dbReference type="SAM" id="MobiDB-lite"/>
    </source>
</evidence>
<evidence type="ECO:0000305" key="3"/>